<name>Y072_METJA</name>
<accession>Q60378</accession>
<feature type="chain" id="PRO_0000106680" description="Uncharacterized protein MJ0072">
    <location>
        <begin position="1"/>
        <end position="44"/>
    </location>
</feature>
<gene>
    <name type="ordered locus">MJ0072</name>
</gene>
<organism>
    <name type="scientific">Methanocaldococcus jannaschii (strain ATCC 43067 / DSM 2661 / JAL-1 / JCM 10045 / NBRC 100440)</name>
    <name type="common">Methanococcus jannaschii</name>
    <dbReference type="NCBI Taxonomy" id="243232"/>
    <lineage>
        <taxon>Archaea</taxon>
        <taxon>Methanobacteriati</taxon>
        <taxon>Methanobacteriota</taxon>
        <taxon>Methanomada group</taxon>
        <taxon>Methanococci</taxon>
        <taxon>Methanococcales</taxon>
        <taxon>Methanocaldococcaceae</taxon>
        <taxon>Methanocaldococcus</taxon>
    </lineage>
</organism>
<sequence length="44" mass="4889">MIILLDLNGTIATDGKIKEGVKERLTILKERAEIYILSADTSEL</sequence>
<dbReference type="EMBL" id="L77117">
    <property type="protein sequence ID" value="AAB98054.1"/>
    <property type="molecule type" value="Genomic_DNA"/>
</dbReference>
<dbReference type="PIR" id="H64308">
    <property type="entry name" value="H64308"/>
</dbReference>
<dbReference type="SMR" id="Q60378"/>
<dbReference type="STRING" id="243232.MJ_0072"/>
<dbReference type="PaxDb" id="243232-MJ_0072"/>
<dbReference type="EnsemblBacteria" id="AAB98054">
    <property type="protein sequence ID" value="AAB98054"/>
    <property type="gene ID" value="MJ_0072"/>
</dbReference>
<dbReference type="KEGG" id="mja:MJ_0072"/>
<dbReference type="eggNOG" id="arCOG05114">
    <property type="taxonomic scope" value="Archaea"/>
</dbReference>
<dbReference type="HOGENOM" id="CLU_3210744_0_0_2"/>
<dbReference type="InParanoid" id="Q60378"/>
<dbReference type="Proteomes" id="UP000000805">
    <property type="component" value="Chromosome"/>
</dbReference>
<dbReference type="InterPro" id="IPR036412">
    <property type="entry name" value="HAD-like_sf"/>
</dbReference>
<dbReference type="SUPFAM" id="SSF56784">
    <property type="entry name" value="HAD-like"/>
    <property type="match status" value="1"/>
</dbReference>
<proteinExistence type="predicted"/>
<reference key="1">
    <citation type="journal article" date="1996" name="Science">
        <title>Complete genome sequence of the methanogenic archaeon, Methanococcus jannaschii.</title>
        <authorList>
            <person name="Bult C.J."/>
            <person name="White O."/>
            <person name="Olsen G.J."/>
            <person name="Zhou L."/>
            <person name="Fleischmann R.D."/>
            <person name="Sutton G.G."/>
            <person name="Blake J.A."/>
            <person name="FitzGerald L.M."/>
            <person name="Clayton R.A."/>
            <person name="Gocayne J.D."/>
            <person name="Kerlavage A.R."/>
            <person name="Dougherty B.A."/>
            <person name="Tomb J.-F."/>
            <person name="Adams M.D."/>
            <person name="Reich C.I."/>
            <person name="Overbeek R."/>
            <person name="Kirkness E.F."/>
            <person name="Weinstock K.G."/>
            <person name="Merrick J.M."/>
            <person name="Glodek A."/>
            <person name="Scott J.L."/>
            <person name="Geoghagen N.S.M."/>
            <person name="Weidman J.F."/>
            <person name="Fuhrmann J.L."/>
            <person name="Nguyen D."/>
            <person name="Utterback T.R."/>
            <person name="Kelley J.M."/>
            <person name="Peterson J.D."/>
            <person name="Sadow P.W."/>
            <person name="Hanna M.C."/>
            <person name="Cotton M.D."/>
            <person name="Roberts K.M."/>
            <person name="Hurst M.A."/>
            <person name="Kaine B.P."/>
            <person name="Borodovsky M."/>
            <person name="Klenk H.-P."/>
            <person name="Fraser C.M."/>
            <person name="Smith H.O."/>
            <person name="Woese C.R."/>
            <person name="Venter J.C."/>
        </authorList>
    </citation>
    <scope>NUCLEOTIDE SEQUENCE [LARGE SCALE GENOMIC DNA]</scope>
    <source>
        <strain>ATCC 43067 / DSM 2661 / JAL-1 / JCM 10045 / NBRC 100440</strain>
    </source>
</reference>
<keyword id="KW-1185">Reference proteome</keyword>
<protein>
    <recommendedName>
        <fullName>Uncharacterized protein MJ0072</fullName>
    </recommendedName>
</protein>